<evidence type="ECO:0000255" key="1">
    <source>
        <dbReference type="HAMAP-Rule" id="MF_03048"/>
    </source>
</evidence>
<evidence type="ECO:0000269" key="2">
    <source>
    </source>
</evidence>
<evidence type="ECO:0000269" key="3">
    <source>
    </source>
</evidence>
<evidence type="ECO:0000303" key="4">
    <source>
    </source>
</evidence>
<evidence type="ECO:0000305" key="5"/>
<accession>Q9BTM9</accession>
<accession>B3KMH3</accession>
<accession>B4DV08</accession>
<accession>Q5T4B4</accession>
<feature type="chain" id="PRO_0000089714" description="Ubiquitin-related modifier 1">
    <location>
        <begin position="1"/>
        <end position="101"/>
    </location>
</feature>
<feature type="modified residue" description="1-thioglycine" evidence="1 2">
    <location>
        <position position="101"/>
    </location>
</feature>
<feature type="cross-link" description="Glycyl lysine isopeptide (Gly-Lys) (interchain with K-? in acceptor proteins)" evidence="1">
    <location>
        <position position="101"/>
    </location>
</feature>
<feature type="splice variant" id="VSP_054296" description="In isoform 3." evidence="5">
    <location>
        <begin position="64"/>
        <end position="101"/>
    </location>
</feature>
<feature type="splice variant" id="VSP_040026" description="In isoform 2." evidence="4">
    <original>LGELDYQLQDQDSVLFISTLHGG</original>
    <variation>LVSTLGDIPPPAPALAASVGKRWASPQAHIEWLGNPPPHSSPTLRLLESPTPGEEGMGSWGHGSTPPS</variation>
    <location>
        <begin position="79"/>
        <end position="101"/>
    </location>
</feature>
<reference key="1">
    <citation type="journal article" date="2004" name="Nat. Genet.">
        <title>Complete sequencing and characterization of 21,243 full-length human cDNAs.</title>
        <authorList>
            <person name="Ota T."/>
            <person name="Suzuki Y."/>
            <person name="Nishikawa T."/>
            <person name="Otsuki T."/>
            <person name="Sugiyama T."/>
            <person name="Irie R."/>
            <person name="Wakamatsu A."/>
            <person name="Hayashi K."/>
            <person name="Sato H."/>
            <person name="Nagai K."/>
            <person name="Kimura K."/>
            <person name="Makita H."/>
            <person name="Sekine M."/>
            <person name="Obayashi M."/>
            <person name="Nishi T."/>
            <person name="Shibahara T."/>
            <person name="Tanaka T."/>
            <person name="Ishii S."/>
            <person name="Yamamoto J."/>
            <person name="Saito K."/>
            <person name="Kawai Y."/>
            <person name="Isono Y."/>
            <person name="Nakamura Y."/>
            <person name="Nagahari K."/>
            <person name="Murakami K."/>
            <person name="Yasuda T."/>
            <person name="Iwayanagi T."/>
            <person name="Wagatsuma M."/>
            <person name="Shiratori A."/>
            <person name="Sudo H."/>
            <person name="Hosoiri T."/>
            <person name="Kaku Y."/>
            <person name="Kodaira H."/>
            <person name="Kondo H."/>
            <person name="Sugawara M."/>
            <person name="Takahashi M."/>
            <person name="Kanda K."/>
            <person name="Yokoi T."/>
            <person name="Furuya T."/>
            <person name="Kikkawa E."/>
            <person name="Omura Y."/>
            <person name="Abe K."/>
            <person name="Kamihara K."/>
            <person name="Katsuta N."/>
            <person name="Sato K."/>
            <person name="Tanikawa M."/>
            <person name="Yamazaki M."/>
            <person name="Ninomiya K."/>
            <person name="Ishibashi T."/>
            <person name="Yamashita H."/>
            <person name="Murakawa K."/>
            <person name="Fujimori K."/>
            <person name="Tanai H."/>
            <person name="Kimata M."/>
            <person name="Watanabe M."/>
            <person name="Hiraoka S."/>
            <person name="Chiba Y."/>
            <person name="Ishida S."/>
            <person name="Ono Y."/>
            <person name="Takiguchi S."/>
            <person name="Watanabe S."/>
            <person name="Yosida M."/>
            <person name="Hotuta T."/>
            <person name="Kusano J."/>
            <person name="Kanehori K."/>
            <person name="Takahashi-Fujii A."/>
            <person name="Hara H."/>
            <person name="Tanase T.-O."/>
            <person name="Nomura Y."/>
            <person name="Togiya S."/>
            <person name="Komai F."/>
            <person name="Hara R."/>
            <person name="Takeuchi K."/>
            <person name="Arita M."/>
            <person name="Imose N."/>
            <person name="Musashino K."/>
            <person name="Yuuki H."/>
            <person name="Oshima A."/>
            <person name="Sasaki N."/>
            <person name="Aotsuka S."/>
            <person name="Yoshikawa Y."/>
            <person name="Matsunawa H."/>
            <person name="Ichihara T."/>
            <person name="Shiohata N."/>
            <person name="Sano S."/>
            <person name="Moriya S."/>
            <person name="Momiyama H."/>
            <person name="Satoh N."/>
            <person name="Takami S."/>
            <person name="Terashima Y."/>
            <person name="Suzuki O."/>
            <person name="Nakagawa S."/>
            <person name="Senoh A."/>
            <person name="Mizoguchi H."/>
            <person name="Goto Y."/>
            <person name="Shimizu F."/>
            <person name="Wakebe H."/>
            <person name="Hishigaki H."/>
            <person name="Watanabe T."/>
            <person name="Sugiyama A."/>
            <person name="Takemoto M."/>
            <person name="Kawakami B."/>
            <person name="Yamazaki M."/>
            <person name="Watanabe K."/>
            <person name="Kumagai A."/>
            <person name="Itakura S."/>
            <person name="Fukuzumi Y."/>
            <person name="Fujimori Y."/>
            <person name="Komiyama M."/>
            <person name="Tashiro H."/>
            <person name="Tanigami A."/>
            <person name="Fujiwara T."/>
            <person name="Ono T."/>
            <person name="Yamada K."/>
            <person name="Fujii Y."/>
            <person name="Ozaki K."/>
            <person name="Hirao M."/>
            <person name="Ohmori Y."/>
            <person name="Kawabata A."/>
            <person name="Hikiji T."/>
            <person name="Kobatake N."/>
            <person name="Inagaki H."/>
            <person name="Ikema Y."/>
            <person name="Okamoto S."/>
            <person name="Okitani R."/>
            <person name="Kawakami T."/>
            <person name="Noguchi S."/>
            <person name="Itoh T."/>
            <person name="Shigeta K."/>
            <person name="Senba T."/>
            <person name="Matsumura K."/>
            <person name="Nakajima Y."/>
            <person name="Mizuno T."/>
            <person name="Morinaga M."/>
            <person name="Sasaki M."/>
            <person name="Togashi T."/>
            <person name="Oyama M."/>
            <person name="Hata H."/>
            <person name="Watanabe M."/>
            <person name="Komatsu T."/>
            <person name="Mizushima-Sugano J."/>
            <person name="Satoh T."/>
            <person name="Shirai Y."/>
            <person name="Takahashi Y."/>
            <person name="Nakagawa K."/>
            <person name="Okumura K."/>
            <person name="Nagase T."/>
            <person name="Nomura N."/>
            <person name="Kikuchi H."/>
            <person name="Masuho Y."/>
            <person name="Yamashita R."/>
            <person name="Nakai K."/>
            <person name="Yada T."/>
            <person name="Nakamura Y."/>
            <person name="Ohara O."/>
            <person name="Isogai T."/>
            <person name="Sugano S."/>
        </authorList>
    </citation>
    <scope>NUCLEOTIDE SEQUENCE [LARGE SCALE MRNA] (ISOFORMS 1 AND 2)</scope>
    <source>
        <tissue>Placenta</tissue>
        <tissue>Small intestine</tissue>
    </source>
</reference>
<reference key="2">
    <citation type="journal article" date="2004" name="Nature">
        <title>DNA sequence and analysis of human chromosome 9.</title>
        <authorList>
            <person name="Humphray S.J."/>
            <person name="Oliver K."/>
            <person name="Hunt A.R."/>
            <person name="Plumb R.W."/>
            <person name="Loveland J.E."/>
            <person name="Howe K.L."/>
            <person name="Andrews T.D."/>
            <person name="Searle S."/>
            <person name="Hunt S.E."/>
            <person name="Scott C.E."/>
            <person name="Jones M.C."/>
            <person name="Ainscough R."/>
            <person name="Almeida J.P."/>
            <person name="Ambrose K.D."/>
            <person name="Ashwell R.I.S."/>
            <person name="Babbage A.K."/>
            <person name="Babbage S."/>
            <person name="Bagguley C.L."/>
            <person name="Bailey J."/>
            <person name="Banerjee R."/>
            <person name="Barker D.J."/>
            <person name="Barlow K.F."/>
            <person name="Bates K."/>
            <person name="Beasley H."/>
            <person name="Beasley O."/>
            <person name="Bird C.P."/>
            <person name="Bray-Allen S."/>
            <person name="Brown A.J."/>
            <person name="Brown J.Y."/>
            <person name="Burford D."/>
            <person name="Burrill W."/>
            <person name="Burton J."/>
            <person name="Carder C."/>
            <person name="Carter N.P."/>
            <person name="Chapman J.C."/>
            <person name="Chen Y."/>
            <person name="Clarke G."/>
            <person name="Clark S.Y."/>
            <person name="Clee C.M."/>
            <person name="Clegg S."/>
            <person name="Collier R.E."/>
            <person name="Corby N."/>
            <person name="Crosier M."/>
            <person name="Cummings A.T."/>
            <person name="Davies J."/>
            <person name="Dhami P."/>
            <person name="Dunn M."/>
            <person name="Dutta I."/>
            <person name="Dyer L.W."/>
            <person name="Earthrowl M.E."/>
            <person name="Faulkner L."/>
            <person name="Fleming C.J."/>
            <person name="Frankish A."/>
            <person name="Frankland J.A."/>
            <person name="French L."/>
            <person name="Fricker D.G."/>
            <person name="Garner P."/>
            <person name="Garnett J."/>
            <person name="Ghori J."/>
            <person name="Gilbert J.G.R."/>
            <person name="Glison C."/>
            <person name="Grafham D.V."/>
            <person name="Gribble S."/>
            <person name="Griffiths C."/>
            <person name="Griffiths-Jones S."/>
            <person name="Grocock R."/>
            <person name="Guy J."/>
            <person name="Hall R.E."/>
            <person name="Hammond S."/>
            <person name="Harley J.L."/>
            <person name="Harrison E.S.I."/>
            <person name="Hart E.A."/>
            <person name="Heath P.D."/>
            <person name="Henderson C.D."/>
            <person name="Hopkins B.L."/>
            <person name="Howard P.J."/>
            <person name="Howden P.J."/>
            <person name="Huckle E."/>
            <person name="Johnson C."/>
            <person name="Johnson D."/>
            <person name="Joy A.A."/>
            <person name="Kay M."/>
            <person name="Keenan S."/>
            <person name="Kershaw J.K."/>
            <person name="Kimberley A.M."/>
            <person name="King A."/>
            <person name="Knights A."/>
            <person name="Laird G.K."/>
            <person name="Langford C."/>
            <person name="Lawlor S."/>
            <person name="Leongamornlert D.A."/>
            <person name="Leversha M."/>
            <person name="Lloyd C."/>
            <person name="Lloyd D.M."/>
            <person name="Lovell J."/>
            <person name="Martin S."/>
            <person name="Mashreghi-Mohammadi M."/>
            <person name="Matthews L."/>
            <person name="McLaren S."/>
            <person name="McLay K.E."/>
            <person name="McMurray A."/>
            <person name="Milne S."/>
            <person name="Nickerson T."/>
            <person name="Nisbett J."/>
            <person name="Nordsiek G."/>
            <person name="Pearce A.V."/>
            <person name="Peck A.I."/>
            <person name="Porter K.M."/>
            <person name="Pandian R."/>
            <person name="Pelan S."/>
            <person name="Phillimore B."/>
            <person name="Povey S."/>
            <person name="Ramsey Y."/>
            <person name="Rand V."/>
            <person name="Scharfe M."/>
            <person name="Sehra H.K."/>
            <person name="Shownkeen R."/>
            <person name="Sims S.K."/>
            <person name="Skuce C.D."/>
            <person name="Smith M."/>
            <person name="Steward C.A."/>
            <person name="Swarbreck D."/>
            <person name="Sycamore N."/>
            <person name="Tester J."/>
            <person name="Thorpe A."/>
            <person name="Tracey A."/>
            <person name="Tromans A."/>
            <person name="Thomas D.W."/>
            <person name="Wall M."/>
            <person name="Wallis J.M."/>
            <person name="West A.P."/>
            <person name="Whitehead S.L."/>
            <person name="Willey D.L."/>
            <person name="Williams S.A."/>
            <person name="Wilming L."/>
            <person name="Wray P.W."/>
            <person name="Young L."/>
            <person name="Ashurst J.L."/>
            <person name="Coulson A."/>
            <person name="Blocker H."/>
            <person name="Durbin R.M."/>
            <person name="Sulston J.E."/>
            <person name="Hubbard T."/>
            <person name="Jackson M.J."/>
            <person name="Bentley D.R."/>
            <person name="Beck S."/>
            <person name="Rogers J."/>
            <person name="Dunham I."/>
        </authorList>
    </citation>
    <scope>NUCLEOTIDE SEQUENCE [LARGE SCALE GENOMIC DNA]</scope>
</reference>
<reference key="3">
    <citation type="submission" date="2005-07" db="EMBL/GenBank/DDBJ databases">
        <authorList>
            <person name="Mural R.J."/>
            <person name="Istrail S."/>
            <person name="Sutton G.G."/>
            <person name="Florea L."/>
            <person name="Halpern A.L."/>
            <person name="Mobarry C.M."/>
            <person name="Lippert R."/>
            <person name="Walenz B."/>
            <person name="Shatkay H."/>
            <person name="Dew I."/>
            <person name="Miller J.R."/>
            <person name="Flanigan M.J."/>
            <person name="Edwards N.J."/>
            <person name="Bolanos R."/>
            <person name="Fasulo D."/>
            <person name="Halldorsson B.V."/>
            <person name="Hannenhalli S."/>
            <person name="Turner R."/>
            <person name="Yooseph S."/>
            <person name="Lu F."/>
            <person name="Nusskern D.R."/>
            <person name="Shue B.C."/>
            <person name="Zheng X.H."/>
            <person name="Zhong F."/>
            <person name="Delcher A.L."/>
            <person name="Huson D.H."/>
            <person name="Kravitz S.A."/>
            <person name="Mouchard L."/>
            <person name="Reinert K."/>
            <person name="Remington K.A."/>
            <person name="Clark A.G."/>
            <person name="Waterman M.S."/>
            <person name="Eichler E.E."/>
            <person name="Adams M.D."/>
            <person name="Hunkapiller M.W."/>
            <person name="Myers E.W."/>
            <person name="Venter J.C."/>
        </authorList>
    </citation>
    <scope>NUCLEOTIDE SEQUENCE [LARGE SCALE GENOMIC DNA]</scope>
</reference>
<reference key="4">
    <citation type="journal article" date="2004" name="Genome Res.">
        <title>The status, quality, and expansion of the NIH full-length cDNA project: the Mammalian Gene Collection (MGC).</title>
        <authorList>
            <consortium name="The MGC Project Team"/>
        </authorList>
    </citation>
    <scope>NUCLEOTIDE SEQUENCE [LARGE SCALE MRNA] (ISOFORM 1)</scope>
    <source>
        <tissue>Placenta</tissue>
    </source>
</reference>
<reference key="5">
    <citation type="journal article" date="2008" name="Proc. Natl. Acad. Sci. U.S.A.">
        <title>A functional proteomics approach links the ubiquitin-related modifier Urm1 to a tRNA modification pathway.</title>
        <authorList>
            <person name="Schlieker C.D."/>
            <person name="Van der Veen A.G."/>
            <person name="Damon J.R."/>
            <person name="Spooner E."/>
            <person name="Ploegh H.L."/>
        </authorList>
    </citation>
    <scope>FUNCTION IN 2-THIOLATION OF TRNA</scope>
    <scope>IDENTIFICATION IN A COMPLEX WITH CTU1 AND C16ORF84</scope>
    <scope>THIOCARBOXYLATION AT GLY-101</scope>
</reference>
<reference key="6">
    <citation type="journal article" date="2011" name="Proc. Natl. Acad. Sci. U.S.A.">
        <title>Role of the ubiquitin-like protein Urm1 as a noncanonical lysine-directed protein modifier.</title>
        <authorList>
            <person name="Van der Veen A.G."/>
            <person name="Schorpp K."/>
            <person name="Schlieker C."/>
            <person name="Buti L."/>
            <person name="Damon J.R."/>
            <person name="Spooner E."/>
            <person name="Ploegh H.L."/>
            <person name="Jentsch S."/>
        </authorList>
    </citation>
    <scope>FUNCTION IN PROTEIN CONJUGATION</scope>
    <scope>IDENTIFICATION OF SUBSTRATES</scope>
</reference>
<protein>
    <recommendedName>
        <fullName evidence="1">Ubiquitin-related modifier 1</fullName>
    </recommendedName>
</protein>
<name>URM1_HUMAN</name>
<comment type="function">
    <text evidence="1 2 3">Acts as a sulfur carrier required for 2-thiolation of mcm(5)S(2)U at tRNA wobble positions of cytosolic tRNA(Lys), tRNA(Glu) and tRNA(Gln). Serves as sulfur donor in tRNA 2-thiolation reaction by being thiocarboxylated (-COSH) at its C-terminus by MOCS3. The sulfur is then transferred to tRNA to form 2-thiolation of mcm(5)S(2)U. Also acts as a ubiquitin-like protein (UBL) that is covalently conjugated via an isopeptide bond to lysine residues of target proteins such as MOCS3, ATPBD3, CTU2, USP15 and CAS. The thiocarboxylated form serves as substrate for conjugation and oxidative stress specifically induces the formation of UBL-protein conjugates.</text>
</comment>
<comment type="pathway">
    <text evidence="1">tRNA modification; 5-methoxycarbonylmethyl-2-thiouridine-tRNA biosynthesis.</text>
</comment>
<comment type="subunit">
    <text evidence="1 2">Component of a complex at least composed of URM1, CTU2/NCS2 and CTU1/ATPBD3.</text>
</comment>
<comment type="interaction">
    <interactant intactId="EBI-714589">
        <id>Q9BTM9</id>
    </interactant>
    <interactant intactId="EBI-286709">
        <id>P55060</id>
        <label>CSE1L</label>
    </interactant>
    <organismsDiffer>false</organismsDiffer>
    <experiments>2</experiments>
</comment>
<comment type="interaction">
    <interactant intactId="EBI-714589">
        <id>Q9BTM9</id>
    </interactant>
    <interactant intactId="EBI-15741880">
        <id>Q7Z7A3</id>
        <label>CTU1</label>
    </interactant>
    <organismsDiffer>false</organismsDiffer>
    <experiments>7</experiments>
</comment>
<comment type="interaction">
    <interactant intactId="EBI-714589">
        <id>Q9BTM9</id>
    </interactant>
    <interactant intactId="EBI-373206">
        <id>O95396</id>
        <label>MOCS3</label>
    </interactant>
    <organismsDiffer>false</organismsDiffer>
    <experiments>4</experiments>
</comment>
<comment type="interaction">
    <interactant intactId="EBI-714589">
        <id>Q9BTM9</id>
    </interactant>
    <interactant intactId="EBI-1043104">
        <id>Q9Y4E8</id>
        <label>USP15</label>
    </interactant>
    <organismsDiffer>false</organismsDiffer>
    <experiments>2</experiments>
</comment>
<comment type="subcellular location">
    <subcellularLocation>
        <location>Cytoplasm</location>
    </subcellularLocation>
</comment>
<comment type="alternative products">
    <event type="alternative splicing"/>
    <isoform>
        <id>Q9BTM9-1</id>
        <name>1</name>
        <sequence type="displayed"/>
    </isoform>
    <isoform>
        <id>Q9BTM9-2</id>
        <name>2</name>
        <sequence type="described" ref="VSP_040026"/>
    </isoform>
    <isoform>
        <id>Q9BTM9-3</id>
        <name>3</name>
        <sequence type="described" ref="VSP_054296"/>
    </isoform>
</comment>
<comment type="PTM">
    <text evidence="1 2">C-terminal thiocarboxylation occurs in 2 steps, it is first acyl-adenylated (-COAMP) via the hesA/moeB/thiF part of MOCS3, then thiocarboxylated (-COSH) via the rhodanese domain of MOCS3.</text>
</comment>
<comment type="similarity">
    <text evidence="1">Belongs to the URM1 family.</text>
</comment>
<gene>
    <name evidence="1" type="primary">URM1</name>
    <name type="synonym">C9orf74</name>
</gene>
<proteinExistence type="evidence at protein level"/>
<dbReference type="EMBL" id="AK001880">
    <property type="protein sequence ID" value="BAG50985.1"/>
    <property type="molecule type" value="mRNA"/>
</dbReference>
<dbReference type="EMBL" id="AK300877">
    <property type="protein sequence ID" value="BAG62520.1"/>
    <property type="molecule type" value="mRNA"/>
</dbReference>
<dbReference type="EMBL" id="AL359091">
    <property type="status" value="NOT_ANNOTATED_CDS"/>
    <property type="molecule type" value="Genomic_DNA"/>
</dbReference>
<dbReference type="EMBL" id="CH471090">
    <property type="protein sequence ID" value="EAW87782.1"/>
    <property type="molecule type" value="Genomic_DNA"/>
</dbReference>
<dbReference type="EMBL" id="BC003581">
    <property type="protein sequence ID" value="AAH03581.1"/>
    <property type="molecule type" value="mRNA"/>
</dbReference>
<dbReference type="CCDS" id="CCDS48035.1">
    <molecule id="Q9BTM9-2"/>
</dbReference>
<dbReference type="CCDS" id="CCDS59148.1">
    <molecule id="Q9BTM9-3"/>
</dbReference>
<dbReference type="CCDS" id="CCDS6900.1">
    <molecule id="Q9BTM9-1"/>
</dbReference>
<dbReference type="RefSeq" id="NP_001129419.1">
    <molecule id="Q9BTM9-2"/>
    <property type="nucleotide sequence ID" value="NM_001135947.2"/>
</dbReference>
<dbReference type="RefSeq" id="NP_001252511.1">
    <molecule id="Q9BTM9-3"/>
    <property type="nucleotide sequence ID" value="NM_001265582.1"/>
</dbReference>
<dbReference type="RefSeq" id="NP_112176.1">
    <molecule id="Q9BTM9-1"/>
    <property type="nucleotide sequence ID" value="NM_030914.4"/>
</dbReference>
<dbReference type="SMR" id="Q9BTM9"/>
<dbReference type="BioGRID" id="123542">
    <property type="interactions" value="33"/>
</dbReference>
<dbReference type="DIP" id="DIP-48631N"/>
<dbReference type="FunCoup" id="Q9BTM9">
    <property type="interactions" value="2765"/>
</dbReference>
<dbReference type="IntAct" id="Q9BTM9">
    <property type="interactions" value="36"/>
</dbReference>
<dbReference type="STRING" id="9606.ENSP00000501135"/>
<dbReference type="iPTMnet" id="Q9BTM9"/>
<dbReference type="PhosphoSitePlus" id="Q9BTM9"/>
<dbReference type="BioMuta" id="URM1"/>
<dbReference type="DMDM" id="68565265"/>
<dbReference type="jPOST" id="Q9BTM9"/>
<dbReference type="MassIVE" id="Q9BTM9"/>
<dbReference type="PaxDb" id="9606-ENSP00000412922"/>
<dbReference type="PeptideAtlas" id="Q9BTM9"/>
<dbReference type="ProteomicsDB" id="78999">
    <molecule id="Q9BTM9-1"/>
</dbReference>
<dbReference type="ProteomicsDB" id="79000">
    <molecule id="Q9BTM9-2"/>
</dbReference>
<dbReference type="Pumba" id="Q9BTM9"/>
<dbReference type="TopDownProteomics" id="Q9BTM9-1">
    <molecule id="Q9BTM9-1"/>
</dbReference>
<dbReference type="Antibodypedia" id="17464">
    <property type="antibodies" value="131 antibodies from 27 providers"/>
</dbReference>
<dbReference type="DNASU" id="81605"/>
<dbReference type="Ensembl" id="ENST00000372850.5">
    <molecule id="Q9BTM9-3"/>
    <property type="protein sequence ID" value="ENSP00000361941.1"/>
    <property type="gene ID" value="ENSG00000167118.11"/>
</dbReference>
<dbReference type="Ensembl" id="ENST00000372853.9">
    <molecule id="Q9BTM9-1"/>
    <property type="protein sequence ID" value="ENSP00000361944.4"/>
    <property type="gene ID" value="ENSG00000167118.11"/>
</dbReference>
<dbReference type="Ensembl" id="ENST00000483206.2">
    <molecule id="Q9BTM9-2"/>
    <property type="protein sequence ID" value="ENSP00000501135.1"/>
    <property type="gene ID" value="ENSG00000167118.11"/>
</dbReference>
<dbReference type="GeneID" id="81605"/>
<dbReference type="KEGG" id="hsa:81605"/>
<dbReference type="MANE-Select" id="ENST00000372853.9">
    <property type="protein sequence ID" value="ENSP00000361944.4"/>
    <property type="RefSeq nucleotide sequence ID" value="NM_030914.4"/>
    <property type="RefSeq protein sequence ID" value="NP_112176.1"/>
</dbReference>
<dbReference type="UCSC" id="uc004buv.3">
    <molecule id="Q9BTM9-1"/>
    <property type="organism name" value="human"/>
</dbReference>
<dbReference type="AGR" id="HGNC:28378"/>
<dbReference type="CTD" id="81605"/>
<dbReference type="DisGeNET" id="81605"/>
<dbReference type="GeneCards" id="URM1"/>
<dbReference type="HGNC" id="HGNC:28378">
    <property type="gene designation" value="URM1"/>
</dbReference>
<dbReference type="HPA" id="ENSG00000167118">
    <property type="expression patterns" value="Low tissue specificity"/>
</dbReference>
<dbReference type="MIM" id="612693">
    <property type="type" value="gene"/>
</dbReference>
<dbReference type="neXtProt" id="NX_Q9BTM9"/>
<dbReference type="OpenTargets" id="ENSG00000167118"/>
<dbReference type="PharmGKB" id="PA162408677"/>
<dbReference type="VEuPathDB" id="HostDB:ENSG00000167118"/>
<dbReference type="eggNOG" id="KOG4146">
    <property type="taxonomic scope" value="Eukaryota"/>
</dbReference>
<dbReference type="GeneTree" id="ENSGT00390000005101"/>
<dbReference type="HOGENOM" id="CLU_148208_0_1_1"/>
<dbReference type="InParanoid" id="Q9BTM9"/>
<dbReference type="OMA" id="DYELQPN"/>
<dbReference type="OrthoDB" id="10248987at2759"/>
<dbReference type="PAN-GO" id="Q9BTM9">
    <property type="GO annotations" value="3 GO annotations based on evolutionary models"/>
</dbReference>
<dbReference type="PhylomeDB" id="Q9BTM9"/>
<dbReference type="TreeFam" id="TF336363"/>
<dbReference type="BioCyc" id="MetaCyc:ENSG00000167118-MONOMER"/>
<dbReference type="PathwayCommons" id="Q9BTM9"/>
<dbReference type="Reactome" id="R-HSA-6782315">
    <property type="pathway name" value="tRNA modification in the nucleus and cytosol"/>
</dbReference>
<dbReference type="SignaLink" id="Q9BTM9"/>
<dbReference type="UniPathway" id="UPA00988"/>
<dbReference type="BioGRID-ORCS" id="81605">
    <property type="hits" value="527 hits in 1170 CRISPR screens"/>
</dbReference>
<dbReference type="ChiTaRS" id="URM1">
    <property type="organism name" value="human"/>
</dbReference>
<dbReference type="GenomeRNAi" id="81605"/>
<dbReference type="Pharos" id="Q9BTM9">
    <property type="development level" value="Tbio"/>
</dbReference>
<dbReference type="PRO" id="PR:Q9BTM9"/>
<dbReference type="Proteomes" id="UP000005640">
    <property type="component" value="Chromosome 9"/>
</dbReference>
<dbReference type="RNAct" id="Q9BTM9">
    <property type="molecule type" value="protein"/>
</dbReference>
<dbReference type="Bgee" id="ENSG00000167118">
    <property type="expression patterns" value="Expressed in endometrium epithelium and 191 other cell types or tissues"/>
</dbReference>
<dbReference type="ExpressionAtlas" id="Q9BTM9">
    <property type="expression patterns" value="baseline and differential"/>
</dbReference>
<dbReference type="GO" id="GO:0005829">
    <property type="term" value="C:cytosol"/>
    <property type="evidence" value="ECO:0000304"/>
    <property type="project" value="Reactome"/>
</dbReference>
<dbReference type="GO" id="GO:0005634">
    <property type="term" value="C:nucleus"/>
    <property type="evidence" value="ECO:0000318"/>
    <property type="project" value="GO_Central"/>
</dbReference>
<dbReference type="GO" id="GO:0031386">
    <property type="term" value="F:protein tag activity"/>
    <property type="evidence" value="ECO:0000318"/>
    <property type="project" value="GO_Central"/>
</dbReference>
<dbReference type="GO" id="GO:0097163">
    <property type="term" value="F:sulfur carrier activity"/>
    <property type="evidence" value="ECO:0000314"/>
    <property type="project" value="UniProtKB"/>
</dbReference>
<dbReference type="GO" id="GO:0032447">
    <property type="term" value="P:protein urmylation"/>
    <property type="evidence" value="ECO:0000318"/>
    <property type="project" value="GO_Central"/>
</dbReference>
<dbReference type="GO" id="GO:0034227">
    <property type="term" value="P:tRNA thio-modification"/>
    <property type="evidence" value="ECO:0000315"/>
    <property type="project" value="UniProtKB"/>
</dbReference>
<dbReference type="GO" id="GO:0002098">
    <property type="term" value="P:tRNA wobble uridine modification"/>
    <property type="evidence" value="ECO:0000315"/>
    <property type="project" value="UniProtKB"/>
</dbReference>
<dbReference type="CDD" id="cd01764">
    <property type="entry name" value="Ubl_Urm1"/>
    <property type="match status" value="1"/>
</dbReference>
<dbReference type="FunFam" id="3.10.20.30:FF:000021">
    <property type="entry name" value="Ubiquitin-related modifier 1"/>
    <property type="match status" value="1"/>
</dbReference>
<dbReference type="Gene3D" id="3.10.20.30">
    <property type="match status" value="1"/>
</dbReference>
<dbReference type="HAMAP" id="MF_03048">
    <property type="entry name" value="Urm1"/>
    <property type="match status" value="1"/>
</dbReference>
<dbReference type="InterPro" id="IPR012675">
    <property type="entry name" value="Beta-grasp_dom_sf"/>
</dbReference>
<dbReference type="InterPro" id="IPR016155">
    <property type="entry name" value="Mopterin_synth/thiamin_S_b"/>
</dbReference>
<dbReference type="InterPro" id="IPR015221">
    <property type="entry name" value="Urm1"/>
</dbReference>
<dbReference type="PANTHER" id="PTHR14986">
    <property type="entry name" value="RURM1 PROTEIN"/>
    <property type="match status" value="1"/>
</dbReference>
<dbReference type="Pfam" id="PF09138">
    <property type="entry name" value="Urm1"/>
    <property type="match status" value="1"/>
</dbReference>
<dbReference type="PIRSF" id="PIRSF037379">
    <property type="entry name" value="Ubiquitin-related_modifier_1"/>
    <property type="match status" value="1"/>
</dbReference>
<dbReference type="SUPFAM" id="SSF54285">
    <property type="entry name" value="MoaD/ThiS"/>
    <property type="match status" value="1"/>
</dbReference>
<sequence>MAAPLSVEVEFGGGAELLFDGIKKHRVTLPGQEEPWDIRNLLIWIKKNLLKERPELFIQGDSVRPGILVLINDADWELLGELDYQLQDQDSVLFISTLHGG</sequence>
<organism>
    <name type="scientific">Homo sapiens</name>
    <name type="common">Human</name>
    <dbReference type="NCBI Taxonomy" id="9606"/>
    <lineage>
        <taxon>Eukaryota</taxon>
        <taxon>Metazoa</taxon>
        <taxon>Chordata</taxon>
        <taxon>Craniata</taxon>
        <taxon>Vertebrata</taxon>
        <taxon>Euteleostomi</taxon>
        <taxon>Mammalia</taxon>
        <taxon>Eutheria</taxon>
        <taxon>Euarchontoglires</taxon>
        <taxon>Primates</taxon>
        <taxon>Haplorrhini</taxon>
        <taxon>Catarrhini</taxon>
        <taxon>Hominidae</taxon>
        <taxon>Homo</taxon>
    </lineage>
</organism>
<keyword id="KW-0025">Alternative splicing</keyword>
<keyword id="KW-0963">Cytoplasm</keyword>
<keyword id="KW-1017">Isopeptide bond</keyword>
<keyword id="KW-1267">Proteomics identification</keyword>
<keyword id="KW-1185">Reference proteome</keyword>
<keyword id="KW-0819">tRNA processing</keyword>
<keyword id="KW-0833">Ubl conjugation pathway</keyword>